<sequence length="388" mass="43905">MNQHLNGIPAHGGHLINRIATPAERQEFIEKAESLPKIQLDKRALSDLEMIAIGGFSPLNGFMDKDDYESVVVDMRLKNGLPWSIPVTLSVSEEVADSIKEGSWVGLSSPEGEFAGVLELTQKFHYNKAHEAINVYSTQEIKHPGVKVLYDAGPVNLAGPVWLLERHPHPLFPKYQIDPAESRKLFQEKNWKTIVGFQTRNPIHRAHEYIQKCALEVVDGLFLHPLVGATKSDDIPADVRMRCYEIMLEKYFPENRVMMAINPSAMRYAGPREAIFHALVRKNYGCTHFIVGRDHAGVGDYYGTYDAQYIFDEFEPRELDIVPMKFEHAFYCTRTQGMATSKTSPSTGEERIHLSGTKVREMLRRGELPPPEFSRPEVAAELAKAMKI</sequence>
<evidence type="ECO:0000255" key="1">
    <source>
        <dbReference type="HAMAP-Rule" id="MF_00066"/>
    </source>
</evidence>
<comment type="catalytic activity">
    <reaction evidence="1">
        <text>sulfate + ATP + H(+) = adenosine 5'-phosphosulfate + diphosphate</text>
        <dbReference type="Rhea" id="RHEA:18133"/>
        <dbReference type="ChEBI" id="CHEBI:15378"/>
        <dbReference type="ChEBI" id="CHEBI:16189"/>
        <dbReference type="ChEBI" id="CHEBI:30616"/>
        <dbReference type="ChEBI" id="CHEBI:33019"/>
        <dbReference type="ChEBI" id="CHEBI:58243"/>
        <dbReference type="EC" id="2.7.7.4"/>
    </reaction>
</comment>
<comment type="pathway">
    <text evidence="1">Sulfur metabolism; hydrogen sulfide biosynthesis; sulfite from sulfate: step 1/3.</text>
</comment>
<comment type="similarity">
    <text evidence="1">Belongs to the sulfate adenylyltransferase family.</text>
</comment>
<accession>Q111K4</accession>
<protein>
    <recommendedName>
        <fullName evidence="1">Sulfate adenylyltransferase</fullName>
        <ecNumber evidence="1">2.7.7.4</ecNumber>
    </recommendedName>
    <alternativeName>
        <fullName evidence="1">ATP-sulfurylase</fullName>
    </alternativeName>
    <alternativeName>
        <fullName evidence="1">Sulfate adenylate transferase</fullName>
        <shortName evidence="1">SAT</shortName>
    </alternativeName>
</protein>
<dbReference type="EC" id="2.7.7.4" evidence="1"/>
<dbReference type="EMBL" id="CP000393">
    <property type="protein sequence ID" value="ABG51820.1"/>
    <property type="molecule type" value="Genomic_DNA"/>
</dbReference>
<dbReference type="RefSeq" id="WP_011612182.1">
    <property type="nucleotide sequence ID" value="NC_008312.1"/>
</dbReference>
<dbReference type="SMR" id="Q111K4"/>
<dbReference type="STRING" id="203124.Tery_2625"/>
<dbReference type="KEGG" id="ter:Tery_2625"/>
<dbReference type="eggNOG" id="COG2046">
    <property type="taxonomic scope" value="Bacteria"/>
</dbReference>
<dbReference type="HOGENOM" id="CLU_022950_1_1_3"/>
<dbReference type="OrthoDB" id="9804504at2"/>
<dbReference type="UniPathway" id="UPA00140">
    <property type="reaction ID" value="UER00204"/>
</dbReference>
<dbReference type="GO" id="GO:0005524">
    <property type="term" value="F:ATP binding"/>
    <property type="evidence" value="ECO:0007669"/>
    <property type="project" value="UniProtKB-KW"/>
</dbReference>
<dbReference type="GO" id="GO:0004781">
    <property type="term" value="F:sulfate adenylyltransferase (ATP) activity"/>
    <property type="evidence" value="ECO:0007669"/>
    <property type="project" value="UniProtKB-UniRule"/>
</dbReference>
<dbReference type="GO" id="GO:0070814">
    <property type="term" value="P:hydrogen sulfide biosynthetic process"/>
    <property type="evidence" value="ECO:0007669"/>
    <property type="project" value="UniProtKB-UniRule"/>
</dbReference>
<dbReference type="GO" id="GO:0000103">
    <property type="term" value="P:sulfate assimilation"/>
    <property type="evidence" value="ECO:0007669"/>
    <property type="project" value="UniProtKB-UniRule"/>
</dbReference>
<dbReference type="CDD" id="cd00517">
    <property type="entry name" value="ATPS"/>
    <property type="match status" value="1"/>
</dbReference>
<dbReference type="Gene3D" id="3.40.50.620">
    <property type="entry name" value="HUPs"/>
    <property type="match status" value="1"/>
</dbReference>
<dbReference type="Gene3D" id="3.10.400.10">
    <property type="entry name" value="Sulfate adenylyltransferase"/>
    <property type="match status" value="1"/>
</dbReference>
<dbReference type="HAMAP" id="MF_00066">
    <property type="entry name" value="Sulf_adenylyltr"/>
    <property type="match status" value="1"/>
</dbReference>
<dbReference type="InterPro" id="IPR025980">
    <property type="entry name" value="ATP-Sase_PUA-like_dom"/>
</dbReference>
<dbReference type="InterPro" id="IPR015947">
    <property type="entry name" value="PUA-like_sf"/>
</dbReference>
<dbReference type="InterPro" id="IPR014729">
    <property type="entry name" value="Rossmann-like_a/b/a_fold"/>
</dbReference>
<dbReference type="InterPro" id="IPR020792">
    <property type="entry name" value="SO4_adenylyltransferase_pro"/>
</dbReference>
<dbReference type="InterPro" id="IPR024951">
    <property type="entry name" value="Sulfurylase_cat_dom"/>
</dbReference>
<dbReference type="InterPro" id="IPR002650">
    <property type="entry name" value="Sulphate_adenylyltransferase"/>
</dbReference>
<dbReference type="NCBIfam" id="NF003166">
    <property type="entry name" value="PRK04149.1"/>
    <property type="match status" value="1"/>
</dbReference>
<dbReference type="NCBIfam" id="TIGR00339">
    <property type="entry name" value="sopT"/>
    <property type="match status" value="1"/>
</dbReference>
<dbReference type="PANTHER" id="PTHR43509">
    <property type="match status" value="1"/>
</dbReference>
<dbReference type="PANTHER" id="PTHR43509:SF1">
    <property type="entry name" value="SULFATE ADENYLYLTRANSFERASE"/>
    <property type="match status" value="1"/>
</dbReference>
<dbReference type="Pfam" id="PF01747">
    <property type="entry name" value="ATP-sulfurylase"/>
    <property type="match status" value="1"/>
</dbReference>
<dbReference type="Pfam" id="PF14306">
    <property type="entry name" value="PUA_2"/>
    <property type="match status" value="1"/>
</dbReference>
<dbReference type="SUPFAM" id="SSF52374">
    <property type="entry name" value="Nucleotidylyl transferase"/>
    <property type="match status" value="1"/>
</dbReference>
<dbReference type="SUPFAM" id="SSF88697">
    <property type="entry name" value="PUA domain-like"/>
    <property type="match status" value="1"/>
</dbReference>
<gene>
    <name evidence="1" type="primary">sat</name>
    <name type="ordered locus">Tery_2625</name>
</gene>
<feature type="chain" id="PRO_0000340639" description="Sulfate adenylyltransferase">
    <location>
        <begin position="1"/>
        <end position="388"/>
    </location>
</feature>
<name>SAT_TRIEI</name>
<reference key="1">
    <citation type="journal article" date="2015" name="Proc. Natl. Acad. Sci. U.S.A.">
        <title>Trichodesmium genome maintains abundant, widespread noncoding DNA in situ, despite oligotrophic lifestyle.</title>
        <authorList>
            <person name="Walworth N."/>
            <person name="Pfreundt U."/>
            <person name="Nelson W.C."/>
            <person name="Mincer T."/>
            <person name="Heidelberg J.F."/>
            <person name="Fu F."/>
            <person name="Waterbury J.B."/>
            <person name="Glavina del Rio T."/>
            <person name="Goodwin L."/>
            <person name="Kyrpides N.C."/>
            <person name="Land M.L."/>
            <person name="Woyke T."/>
            <person name="Hutchins D.A."/>
            <person name="Hess W.R."/>
            <person name="Webb E.A."/>
        </authorList>
    </citation>
    <scope>NUCLEOTIDE SEQUENCE [LARGE SCALE GENOMIC DNA]</scope>
    <source>
        <strain>IMS101</strain>
    </source>
</reference>
<organism>
    <name type="scientific">Trichodesmium erythraeum (strain IMS101)</name>
    <dbReference type="NCBI Taxonomy" id="203124"/>
    <lineage>
        <taxon>Bacteria</taxon>
        <taxon>Bacillati</taxon>
        <taxon>Cyanobacteriota</taxon>
        <taxon>Cyanophyceae</taxon>
        <taxon>Oscillatoriophycideae</taxon>
        <taxon>Oscillatoriales</taxon>
        <taxon>Microcoleaceae</taxon>
        <taxon>Trichodesmium</taxon>
    </lineage>
</organism>
<keyword id="KW-0067">ATP-binding</keyword>
<keyword id="KW-0547">Nucleotide-binding</keyword>
<keyword id="KW-0548">Nucleotidyltransferase</keyword>
<keyword id="KW-0808">Transferase</keyword>
<proteinExistence type="inferred from homology"/>